<accession>P57662</accession>
<dbReference type="EMBL" id="BA000003">
    <property type="protein sequence ID" value="BAB13291.1"/>
    <property type="molecule type" value="Genomic_DNA"/>
</dbReference>
<dbReference type="RefSeq" id="NP_240405.1">
    <property type="nucleotide sequence ID" value="NC_002528.1"/>
</dbReference>
<dbReference type="RefSeq" id="WP_009874554.1">
    <property type="nucleotide sequence ID" value="NC_002528.1"/>
</dbReference>
<dbReference type="SMR" id="P57662"/>
<dbReference type="STRING" id="563178.BUAP5A_599"/>
<dbReference type="EnsemblBacteria" id="BAB13291">
    <property type="protein sequence ID" value="BAB13291"/>
    <property type="gene ID" value="BAB13291"/>
</dbReference>
<dbReference type="KEGG" id="buc:BU607"/>
<dbReference type="PATRIC" id="fig|107806.10.peg.609"/>
<dbReference type="eggNOG" id="COG1160">
    <property type="taxonomic scope" value="Bacteria"/>
</dbReference>
<dbReference type="HOGENOM" id="CLU_016077_5_1_6"/>
<dbReference type="Proteomes" id="UP000001806">
    <property type="component" value="Chromosome"/>
</dbReference>
<dbReference type="GO" id="GO:0005525">
    <property type="term" value="F:GTP binding"/>
    <property type="evidence" value="ECO:0007669"/>
    <property type="project" value="UniProtKB-UniRule"/>
</dbReference>
<dbReference type="GO" id="GO:0043022">
    <property type="term" value="F:ribosome binding"/>
    <property type="evidence" value="ECO:0007669"/>
    <property type="project" value="TreeGrafter"/>
</dbReference>
<dbReference type="GO" id="GO:0042254">
    <property type="term" value="P:ribosome biogenesis"/>
    <property type="evidence" value="ECO:0007669"/>
    <property type="project" value="UniProtKB-KW"/>
</dbReference>
<dbReference type="CDD" id="cd01894">
    <property type="entry name" value="EngA1"/>
    <property type="match status" value="1"/>
</dbReference>
<dbReference type="CDD" id="cd01895">
    <property type="entry name" value="EngA2"/>
    <property type="match status" value="1"/>
</dbReference>
<dbReference type="FunFam" id="3.30.300.20:FF:000004">
    <property type="entry name" value="GTPase Der"/>
    <property type="match status" value="1"/>
</dbReference>
<dbReference type="Gene3D" id="3.30.300.20">
    <property type="match status" value="1"/>
</dbReference>
<dbReference type="Gene3D" id="3.40.50.300">
    <property type="entry name" value="P-loop containing nucleotide triphosphate hydrolases"/>
    <property type="match status" value="2"/>
</dbReference>
<dbReference type="HAMAP" id="MF_00195">
    <property type="entry name" value="GTPase_Der"/>
    <property type="match status" value="1"/>
</dbReference>
<dbReference type="InterPro" id="IPR031166">
    <property type="entry name" value="G_ENGA"/>
</dbReference>
<dbReference type="InterPro" id="IPR006073">
    <property type="entry name" value="GTP-bd"/>
</dbReference>
<dbReference type="InterPro" id="IPR016484">
    <property type="entry name" value="GTPase_Der"/>
</dbReference>
<dbReference type="InterPro" id="IPR032859">
    <property type="entry name" value="KH_dom-like"/>
</dbReference>
<dbReference type="InterPro" id="IPR015946">
    <property type="entry name" value="KH_dom-like_a/b"/>
</dbReference>
<dbReference type="InterPro" id="IPR027417">
    <property type="entry name" value="P-loop_NTPase"/>
</dbReference>
<dbReference type="InterPro" id="IPR005225">
    <property type="entry name" value="Small_GTP-bd"/>
</dbReference>
<dbReference type="NCBIfam" id="TIGR03594">
    <property type="entry name" value="GTPase_EngA"/>
    <property type="match status" value="1"/>
</dbReference>
<dbReference type="NCBIfam" id="TIGR00231">
    <property type="entry name" value="small_GTP"/>
    <property type="match status" value="2"/>
</dbReference>
<dbReference type="PANTHER" id="PTHR43834">
    <property type="entry name" value="GTPASE DER"/>
    <property type="match status" value="1"/>
</dbReference>
<dbReference type="PANTHER" id="PTHR43834:SF6">
    <property type="entry name" value="GTPASE DER"/>
    <property type="match status" value="1"/>
</dbReference>
<dbReference type="Pfam" id="PF14714">
    <property type="entry name" value="KH_dom-like"/>
    <property type="match status" value="1"/>
</dbReference>
<dbReference type="Pfam" id="PF01926">
    <property type="entry name" value="MMR_HSR1"/>
    <property type="match status" value="2"/>
</dbReference>
<dbReference type="PIRSF" id="PIRSF006485">
    <property type="entry name" value="GTP-binding_EngA"/>
    <property type="match status" value="1"/>
</dbReference>
<dbReference type="PRINTS" id="PR00326">
    <property type="entry name" value="GTP1OBG"/>
</dbReference>
<dbReference type="SUPFAM" id="SSF52540">
    <property type="entry name" value="P-loop containing nucleoside triphosphate hydrolases"/>
    <property type="match status" value="2"/>
</dbReference>
<dbReference type="PROSITE" id="PS51712">
    <property type="entry name" value="G_ENGA"/>
    <property type="match status" value="2"/>
</dbReference>
<comment type="function">
    <text evidence="1">GTPase that plays an essential role in the late steps of ribosome biogenesis.</text>
</comment>
<comment type="subunit">
    <text evidence="1">Associates with the 50S ribosomal subunit.</text>
</comment>
<comment type="similarity">
    <text evidence="1">Belongs to the TRAFAC class TrmE-Era-EngA-EngB-Septin-like GTPase superfamily. EngA (Der) GTPase family.</text>
</comment>
<evidence type="ECO:0000255" key="1">
    <source>
        <dbReference type="HAMAP-Rule" id="MF_00195"/>
    </source>
</evidence>
<name>DER_BUCAI</name>
<reference key="1">
    <citation type="journal article" date="2000" name="Nature">
        <title>Genome sequence of the endocellular bacterial symbiont of aphids Buchnera sp. APS.</title>
        <authorList>
            <person name="Shigenobu S."/>
            <person name="Watanabe H."/>
            <person name="Hattori M."/>
            <person name="Sakaki Y."/>
            <person name="Ishikawa H."/>
        </authorList>
    </citation>
    <scope>NUCLEOTIDE SEQUENCE [LARGE SCALE GENOMIC DNA]</scope>
    <source>
        <strain>APS</strain>
    </source>
</reference>
<protein>
    <recommendedName>
        <fullName evidence="1">GTPase Der</fullName>
    </recommendedName>
    <alternativeName>
        <fullName evidence="1">GTP-binding protein EngA</fullName>
    </alternativeName>
</protein>
<sequence length="453" mass="51899">MIPIIVLIGRTNVGKSTLFNVLTKTRDALVANYPGITRDRQYGYCKLQSNKKIILIDTAGLDIKLNEIEKQAQAQTLIAIKEAHLILFLVNARDGLMPQEYEISKNIRKYQKKTILVINKIDGINEASKINEFYSLGFEKIQKISASHNQGINTLINRYLIPWISEKFKKKITENLYKDTELKKIAIKVAFIGRPNVGKSTLINGILKEERMITSNTPGTTLDSISTPIKYNYENYTLIDTAGASKKKKKINDFQRFSIIKTLQTIEKSNVILLIIDASLQTCHQDLSLADFIIHSGKGIVVVVNKCDLFNSVELKKIKELIKSKLKFLYFSKIHFISALYKKGIFQLFKSIKESYEDSKRKISTSTLIKTMHIAIKKHQPPIIKGRRIKLKYAHLGSSNPPKIIIHGNQVKYLSLPYKRYLINFFYKTLKIKGTPIQIQFKDNENPYVKNKN</sequence>
<gene>
    <name evidence="1" type="primary">der</name>
    <name type="synonym">engA</name>
    <name type="ordered locus">BU607</name>
</gene>
<organism>
    <name type="scientific">Buchnera aphidicola subsp. Acyrthosiphon pisum (strain APS)</name>
    <name type="common">Acyrthosiphon pisum symbiotic bacterium</name>
    <dbReference type="NCBI Taxonomy" id="107806"/>
    <lineage>
        <taxon>Bacteria</taxon>
        <taxon>Pseudomonadati</taxon>
        <taxon>Pseudomonadota</taxon>
        <taxon>Gammaproteobacteria</taxon>
        <taxon>Enterobacterales</taxon>
        <taxon>Erwiniaceae</taxon>
        <taxon>Buchnera</taxon>
    </lineage>
</organism>
<keyword id="KW-0342">GTP-binding</keyword>
<keyword id="KW-0547">Nucleotide-binding</keyword>
<keyword id="KW-1185">Reference proteome</keyword>
<keyword id="KW-0677">Repeat</keyword>
<keyword id="KW-0690">Ribosome biogenesis</keyword>
<feature type="chain" id="PRO_0000178974" description="GTPase Der">
    <location>
        <begin position="1"/>
        <end position="453"/>
    </location>
</feature>
<feature type="domain" description="EngA-type G 1">
    <location>
        <begin position="3"/>
        <end position="167"/>
    </location>
</feature>
<feature type="domain" description="EngA-type G 2">
    <location>
        <begin position="187"/>
        <end position="360"/>
    </location>
</feature>
<feature type="domain" description="KH-like" evidence="1">
    <location>
        <begin position="361"/>
        <end position="445"/>
    </location>
</feature>
<feature type="binding site" evidence="1">
    <location>
        <begin position="9"/>
        <end position="16"/>
    </location>
    <ligand>
        <name>GTP</name>
        <dbReference type="ChEBI" id="CHEBI:37565"/>
        <label>1</label>
    </ligand>
</feature>
<feature type="binding site" evidence="1">
    <location>
        <begin position="57"/>
        <end position="61"/>
    </location>
    <ligand>
        <name>GTP</name>
        <dbReference type="ChEBI" id="CHEBI:37565"/>
        <label>1</label>
    </ligand>
</feature>
<feature type="binding site" evidence="1">
    <location>
        <begin position="119"/>
        <end position="122"/>
    </location>
    <ligand>
        <name>GTP</name>
        <dbReference type="ChEBI" id="CHEBI:37565"/>
        <label>1</label>
    </ligand>
</feature>
<feature type="binding site" evidence="1">
    <location>
        <begin position="193"/>
        <end position="200"/>
    </location>
    <ligand>
        <name>GTP</name>
        <dbReference type="ChEBI" id="CHEBI:37565"/>
        <label>2</label>
    </ligand>
</feature>
<feature type="binding site" evidence="1">
    <location>
        <begin position="240"/>
        <end position="244"/>
    </location>
    <ligand>
        <name>GTP</name>
        <dbReference type="ChEBI" id="CHEBI:37565"/>
        <label>2</label>
    </ligand>
</feature>
<feature type="binding site" evidence="1">
    <location>
        <begin position="305"/>
        <end position="308"/>
    </location>
    <ligand>
        <name>GTP</name>
        <dbReference type="ChEBI" id="CHEBI:37565"/>
        <label>2</label>
    </ligand>
</feature>
<proteinExistence type="inferred from homology"/>